<comment type="interaction">
    <interactant intactId="EBI-10694180">
        <id>Q8TD91-2</id>
    </interactant>
    <interactant intactId="EBI-1053164">
        <id>O75190</id>
        <label>DNAJB6</label>
    </interactant>
    <organismsDiffer>false</organismsDiffer>
    <experiments>3</experiments>
</comment>
<comment type="interaction">
    <interactant intactId="EBI-10694180">
        <id>Q8TD91-2</id>
    </interactant>
    <interactant intactId="EBI-750300">
        <id>Q01658</id>
        <label>DR1</label>
    </interactant>
    <organismsDiffer>false</organismsDiffer>
    <experiments>3</experiments>
</comment>
<comment type="interaction">
    <interactant intactId="EBI-10694180">
        <id>Q8TD91-2</id>
    </interactant>
    <interactant intactId="EBI-9641086">
        <id>P21333-2</id>
        <label>FLNA</label>
    </interactant>
    <organismsDiffer>false</organismsDiffer>
    <experiments>3</experiments>
</comment>
<comment type="interaction">
    <interactant intactId="EBI-10694180">
        <id>Q8TD91-2</id>
    </interactant>
    <interactant intactId="EBI-2558325">
        <id>P78333</id>
        <label>GPC5</label>
    </interactant>
    <organismsDiffer>false</organismsDiffer>
    <experiments>3</experiments>
</comment>
<comment type="interaction">
    <interactant intactId="EBI-10694180">
        <id>Q8TD91-2</id>
    </interactant>
    <interactant intactId="EBI-1054873">
        <id>Q9Y5Q9</id>
        <label>GTF3C3</label>
    </interactant>
    <organismsDiffer>false</organismsDiffer>
    <experiments>3</experiments>
</comment>
<comment type="interaction">
    <interactant intactId="EBI-10694180">
        <id>Q8TD91-2</id>
    </interactant>
    <interactant intactId="EBI-724076">
        <id>Q99750</id>
        <label>MDFI</label>
    </interactant>
    <organismsDiffer>false</organismsDiffer>
    <experiments>3</experiments>
</comment>
<comment type="interaction">
    <interactant intactId="EBI-10694180">
        <id>Q8TD91-2</id>
    </interactant>
    <interactant intactId="EBI-473160">
        <id>Q8N2W9</id>
        <label>PIAS4</label>
    </interactant>
    <organismsDiffer>false</organismsDiffer>
    <experiments>3</experiments>
</comment>
<comment type="interaction">
    <interactant intactId="EBI-10694180">
        <id>Q8TD91-2</id>
    </interactant>
    <interactant intactId="EBI-985879">
        <id>P37840</id>
        <label>SNCA</label>
    </interactant>
    <organismsDiffer>false</organismsDiffer>
    <experiments>3</experiments>
</comment>
<comment type="interaction">
    <interactant intactId="EBI-10694180">
        <id>Q8TD91-2</id>
    </interactant>
    <interactant intactId="EBI-372899">
        <id>Q13148</id>
        <label>TARDBP</label>
    </interactant>
    <organismsDiffer>false</organismsDiffer>
    <experiments>6</experiments>
</comment>
<comment type="interaction">
    <interactant intactId="EBI-10694180">
        <id>Q8TD91-2</id>
    </interactant>
    <interactant intactId="EBI-18239606">
        <id>Q7RTU0</id>
        <label>TCF24</label>
    </interactant>
    <organismsDiffer>false</organismsDiffer>
    <experiments>3</experiments>
</comment>
<comment type="alternative products">
    <event type="alternative splicing"/>
    <isoform>
        <id>Q8TD91-1</id>
        <name>1</name>
        <sequence type="displayed"/>
    </isoform>
    <isoform>
        <id>Q8TD91-2</id>
        <name>2</name>
        <sequence type="described" ref="VSP_043489 VSP_043490 VSP_043491"/>
    </isoform>
</comment>
<comment type="tissue specificity">
    <text evidence="3">Expressed in testis. Not expressed in other normal tissues, but is expressed in tumors of different histological origins.</text>
</comment>
<accession>Q8TD91</accession>
<accession>Q3SYA7</accession>
<accession>Q5JZ43</accession>
<accession>Q9BZ80</accession>
<dbReference type="EMBL" id="AF490508">
    <property type="protein sequence ID" value="AAM08355.1"/>
    <property type="molecule type" value="mRNA"/>
</dbReference>
<dbReference type="EMBL" id="AL022152">
    <property type="status" value="NOT_ANNOTATED_CDS"/>
    <property type="molecule type" value="Genomic_DNA"/>
</dbReference>
<dbReference type="EMBL" id="AL023279">
    <property type="status" value="NOT_ANNOTATED_CDS"/>
    <property type="molecule type" value="Genomic_DNA"/>
</dbReference>
<dbReference type="EMBL" id="AL049177">
    <property type="status" value="NOT_ANNOTATED_CDS"/>
    <property type="molecule type" value="Genomic_DNA"/>
</dbReference>
<dbReference type="EMBL" id="BC103893">
    <property type="protein sequence ID" value="AAI03894.1"/>
    <property type="molecule type" value="mRNA"/>
</dbReference>
<dbReference type="EMBL" id="AF333706">
    <property type="protein sequence ID" value="AAK00358.1"/>
    <property type="molecule type" value="Genomic_DNA"/>
</dbReference>
<dbReference type="CCDS" id="CCDS14676.1">
    <molecule id="Q8TD91-1"/>
</dbReference>
<dbReference type="CCDS" id="CCDS14677.1">
    <molecule id="Q8TD91-2"/>
</dbReference>
<dbReference type="RefSeq" id="NP_619647.1">
    <molecule id="Q8TD91-1"/>
    <property type="nucleotide sequence ID" value="NM_138702.1"/>
</dbReference>
<dbReference type="RefSeq" id="NP_803251.1">
    <molecule id="Q8TD91-2"/>
    <property type="nucleotide sequence ID" value="NM_177456.2"/>
</dbReference>
<dbReference type="RefSeq" id="XP_011529569.1">
    <molecule id="Q8TD91-2"/>
    <property type="nucleotide sequence ID" value="XM_011531267.4"/>
</dbReference>
<dbReference type="RefSeq" id="XP_016884754.1">
    <property type="nucleotide sequence ID" value="XM_017029265.1"/>
</dbReference>
<dbReference type="RefSeq" id="XP_054182430.1">
    <molecule id="Q8TD91-2"/>
    <property type="nucleotide sequence ID" value="XM_054326455.1"/>
</dbReference>
<dbReference type="SMR" id="Q8TD91"/>
<dbReference type="BioGRID" id="126542">
    <property type="interactions" value="10"/>
</dbReference>
<dbReference type="FunCoup" id="Q8TD91">
    <property type="interactions" value="12"/>
</dbReference>
<dbReference type="IntAct" id="Q8TD91">
    <property type="interactions" value="15"/>
</dbReference>
<dbReference type="MINT" id="Q8TD91"/>
<dbReference type="STRING" id="9606.ENSP00000298296"/>
<dbReference type="GlyGen" id="Q8TD91">
    <property type="glycosylation" value="2 sites, 1 O-linked glycan (2 sites)"/>
</dbReference>
<dbReference type="iPTMnet" id="Q8TD91"/>
<dbReference type="PhosphoSitePlus" id="Q8TD91"/>
<dbReference type="BioMuta" id="MAGEC3"/>
<dbReference type="DMDM" id="41017367"/>
<dbReference type="MassIVE" id="Q8TD91"/>
<dbReference type="PaxDb" id="9606-ENSP00000298296"/>
<dbReference type="PeptideAtlas" id="Q8TD91"/>
<dbReference type="ProteomicsDB" id="74253">
    <molecule id="Q8TD91-2"/>
</dbReference>
<dbReference type="Antibodypedia" id="45024">
    <property type="antibodies" value="67 antibodies from 20 providers"/>
</dbReference>
<dbReference type="DNASU" id="139081"/>
<dbReference type="Ensembl" id="ENST00000298296.1">
    <molecule id="Q8TD91-1"/>
    <property type="protein sequence ID" value="ENSP00000298296.1"/>
    <property type="gene ID" value="ENSG00000165509.13"/>
</dbReference>
<dbReference type="Ensembl" id="ENST00000409007.1">
    <molecule id="Q8TD91-2"/>
    <property type="protein sequence ID" value="ENSP00000386566.1"/>
    <property type="gene ID" value="ENSG00000165509.13"/>
</dbReference>
<dbReference type="Ensembl" id="ENST00000544766.5">
    <molecule id="Q8TD91-2"/>
    <property type="protein sequence ID" value="ENSP00000440444.1"/>
    <property type="gene ID" value="ENSG00000165509.13"/>
</dbReference>
<dbReference type="GeneID" id="139081"/>
<dbReference type="KEGG" id="hsa:139081"/>
<dbReference type="MANE-Select" id="ENST00000298296.1">
    <property type="protein sequence ID" value="ENSP00000298296.1"/>
    <property type="RefSeq nucleotide sequence ID" value="NM_138702.1"/>
    <property type="RefSeq protein sequence ID" value="NP_619647.1"/>
</dbReference>
<dbReference type="UCSC" id="uc004fbs.3">
    <molecule id="Q8TD91-1"/>
    <property type="organism name" value="human"/>
</dbReference>
<dbReference type="AGR" id="HGNC:23798"/>
<dbReference type="CTD" id="139081"/>
<dbReference type="DisGeNET" id="139081"/>
<dbReference type="GeneCards" id="MAGEC3"/>
<dbReference type="HGNC" id="HGNC:23798">
    <property type="gene designation" value="MAGEC3"/>
</dbReference>
<dbReference type="HPA" id="ENSG00000165509">
    <property type="expression patterns" value="Tissue enhanced (brain)"/>
</dbReference>
<dbReference type="MIM" id="300469">
    <property type="type" value="gene"/>
</dbReference>
<dbReference type="neXtProt" id="NX_Q8TD91"/>
<dbReference type="OpenTargets" id="ENSG00000165509"/>
<dbReference type="PharmGKB" id="PA134916199"/>
<dbReference type="VEuPathDB" id="HostDB:ENSG00000165509"/>
<dbReference type="eggNOG" id="KOG4562">
    <property type="taxonomic scope" value="Eukaryota"/>
</dbReference>
<dbReference type="GeneTree" id="ENSGT00940000164981"/>
<dbReference type="HOGENOM" id="CLU_508623_0_0_1"/>
<dbReference type="InParanoid" id="Q8TD91"/>
<dbReference type="OMA" id="PLNSSTW"/>
<dbReference type="OrthoDB" id="205198at2759"/>
<dbReference type="PAN-GO" id="Q8TD91">
    <property type="GO annotations" value="2 GO annotations based on evolutionary models"/>
</dbReference>
<dbReference type="PhylomeDB" id="Q8TD91"/>
<dbReference type="TreeFam" id="TF328505"/>
<dbReference type="PathwayCommons" id="Q8TD91"/>
<dbReference type="SignaLink" id="Q8TD91"/>
<dbReference type="BioGRID-ORCS" id="139081">
    <property type="hits" value="12 hits in 770 CRISPR screens"/>
</dbReference>
<dbReference type="ChiTaRS" id="MAGEC3">
    <property type="organism name" value="human"/>
</dbReference>
<dbReference type="GenomeRNAi" id="139081"/>
<dbReference type="Pharos" id="Q8TD91">
    <property type="development level" value="Tbio"/>
</dbReference>
<dbReference type="PRO" id="PR:Q8TD91"/>
<dbReference type="Proteomes" id="UP000005640">
    <property type="component" value="Chromosome X"/>
</dbReference>
<dbReference type="RNAct" id="Q8TD91">
    <property type="molecule type" value="protein"/>
</dbReference>
<dbReference type="Bgee" id="ENSG00000165509">
    <property type="expression patterns" value="Expressed in male germ line stem cell (sensu Vertebrata) in testis and 87 other cell types or tissues"/>
</dbReference>
<dbReference type="ExpressionAtlas" id="Q8TD91">
    <property type="expression patterns" value="baseline and differential"/>
</dbReference>
<dbReference type="GO" id="GO:0005634">
    <property type="term" value="C:nucleus"/>
    <property type="evidence" value="ECO:0000318"/>
    <property type="project" value="GO_Central"/>
</dbReference>
<dbReference type="GO" id="GO:0000122">
    <property type="term" value="P:negative regulation of transcription by RNA polymerase II"/>
    <property type="evidence" value="ECO:0000318"/>
    <property type="project" value="GO_Central"/>
</dbReference>
<dbReference type="FunFam" id="1.10.10.1200:FF:000007">
    <property type="entry name" value="Melanoma-associated antigen C2"/>
    <property type="match status" value="2"/>
</dbReference>
<dbReference type="Gene3D" id="1.10.10.1200">
    <property type="entry name" value="MAGE homology domain, winged helix WH1 motif"/>
    <property type="match status" value="2"/>
</dbReference>
<dbReference type="Gene3D" id="1.10.10.1210">
    <property type="entry name" value="MAGE homology domain, winged helix WH2 motif"/>
    <property type="match status" value="2"/>
</dbReference>
<dbReference type="InterPro" id="IPR037445">
    <property type="entry name" value="MAGE"/>
</dbReference>
<dbReference type="InterPro" id="IPR041898">
    <property type="entry name" value="MAGE_WH1"/>
</dbReference>
<dbReference type="InterPro" id="IPR041899">
    <property type="entry name" value="MAGE_WH2"/>
</dbReference>
<dbReference type="InterPro" id="IPR002190">
    <property type="entry name" value="MHD_dom"/>
</dbReference>
<dbReference type="PANTHER" id="PTHR11736:SF86">
    <property type="entry name" value="MELANOMA-ASSOCIATED ANTIGEN C3"/>
    <property type="match status" value="1"/>
</dbReference>
<dbReference type="PANTHER" id="PTHR11736">
    <property type="entry name" value="MELANOMA-ASSOCIATED ANTIGEN MAGE ANTIGEN"/>
    <property type="match status" value="1"/>
</dbReference>
<dbReference type="SMART" id="SM01373">
    <property type="entry name" value="MAGE"/>
    <property type="match status" value="2"/>
</dbReference>
<dbReference type="PROSITE" id="PS50838">
    <property type="entry name" value="MAGE"/>
    <property type="match status" value="2"/>
</dbReference>
<evidence type="ECO:0000255" key="1">
    <source>
        <dbReference type="PROSITE-ProRule" id="PRU00127"/>
    </source>
</evidence>
<evidence type="ECO:0000256" key="2">
    <source>
        <dbReference type="SAM" id="MobiDB-lite"/>
    </source>
</evidence>
<evidence type="ECO:0000269" key="3">
    <source>
    </source>
</evidence>
<evidence type="ECO:0000303" key="4">
    <source>
    </source>
</evidence>
<evidence type="ECO:0000305" key="5"/>
<evidence type="ECO:0007744" key="6">
    <source>
    </source>
</evidence>
<organism>
    <name type="scientific">Homo sapiens</name>
    <name type="common">Human</name>
    <dbReference type="NCBI Taxonomy" id="9606"/>
    <lineage>
        <taxon>Eukaryota</taxon>
        <taxon>Metazoa</taxon>
        <taxon>Chordata</taxon>
        <taxon>Craniata</taxon>
        <taxon>Vertebrata</taxon>
        <taxon>Euteleostomi</taxon>
        <taxon>Mammalia</taxon>
        <taxon>Eutheria</taxon>
        <taxon>Euarchontoglires</taxon>
        <taxon>Primates</taxon>
        <taxon>Haplorrhini</taxon>
        <taxon>Catarrhini</taxon>
        <taxon>Hominidae</taxon>
        <taxon>Homo</taxon>
    </lineage>
</organism>
<keyword id="KW-0025">Alternative splicing</keyword>
<keyword id="KW-0597">Phosphoprotein</keyword>
<keyword id="KW-1185">Reference proteome</keyword>
<keyword id="KW-0677">Repeat</keyword>
<keyword id="KW-0825">Tumor antigen</keyword>
<gene>
    <name type="primary">MAGEC3</name>
    <name type="synonym">HCA2</name>
</gene>
<name>MAGC3_HUMAN</name>
<reference key="1">
    <citation type="submission" date="2002-03" db="EMBL/GenBank/DDBJ databases">
        <title>Identification of genes in the chromosome X that are differentially expressed in hepatocellular carcinoma.</title>
        <authorList>
            <person name="Dong X.-Y."/>
            <person name="Chen W.-F."/>
        </authorList>
    </citation>
    <scope>NUCLEOTIDE SEQUENCE [MRNA] (ISOFORM 1)</scope>
</reference>
<reference key="2">
    <citation type="journal article" date="2005" name="Nature">
        <title>The DNA sequence of the human X chromosome.</title>
        <authorList>
            <person name="Ross M.T."/>
            <person name="Grafham D.V."/>
            <person name="Coffey A.J."/>
            <person name="Scherer S."/>
            <person name="McLay K."/>
            <person name="Muzny D."/>
            <person name="Platzer M."/>
            <person name="Howell G.R."/>
            <person name="Burrows C."/>
            <person name="Bird C.P."/>
            <person name="Frankish A."/>
            <person name="Lovell F.L."/>
            <person name="Howe K.L."/>
            <person name="Ashurst J.L."/>
            <person name="Fulton R.S."/>
            <person name="Sudbrak R."/>
            <person name="Wen G."/>
            <person name="Jones M.C."/>
            <person name="Hurles M.E."/>
            <person name="Andrews T.D."/>
            <person name="Scott C.E."/>
            <person name="Searle S."/>
            <person name="Ramser J."/>
            <person name="Whittaker A."/>
            <person name="Deadman R."/>
            <person name="Carter N.P."/>
            <person name="Hunt S.E."/>
            <person name="Chen R."/>
            <person name="Cree A."/>
            <person name="Gunaratne P."/>
            <person name="Havlak P."/>
            <person name="Hodgson A."/>
            <person name="Metzker M.L."/>
            <person name="Richards S."/>
            <person name="Scott G."/>
            <person name="Steffen D."/>
            <person name="Sodergren E."/>
            <person name="Wheeler D.A."/>
            <person name="Worley K.C."/>
            <person name="Ainscough R."/>
            <person name="Ambrose K.D."/>
            <person name="Ansari-Lari M.A."/>
            <person name="Aradhya S."/>
            <person name="Ashwell R.I."/>
            <person name="Babbage A.K."/>
            <person name="Bagguley C.L."/>
            <person name="Ballabio A."/>
            <person name="Banerjee R."/>
            <person name="Barker G.E."/>
            <person name="Barlow K.F."/>
            <person name="Barrett I.P."/>
            <person name="Bates K.N."/>
            <person name="Beare D.M."/>
            <person name="Beasley H."/>
            <person name="Beasley O."/>
            <person name="Beck A."/>
            <person name="Bethel G."/>
            <person name="Blechschmidt K."/>
            <person name="Brady N."/>
            <person name="Bray-Allen S."/>
            <person name="Bridgeman A.M."/>
            <person name="Brown A.J."/>
            <person name="Brown M.J."/>
            <person name="Bonnin D."/>
            <person name="Bruford E.A."/>
            <person name="Buhay C."/>
            <person name="Burch P."/>
            <person name="Burford D."/>
            <person name="Burgess J."/>
            <person name="Burrill W."/>
            <person name="Burton J."/>
            <person name="Bye J.M."/>
            <person name="Carder C."/>
            <person name="Carrel L."/>
            <person name="Chako J."/>
            <person name="Chapman J.C."/>
            <person name="Chavez D."/>
            <person name="Chen E."/>
            <person name="Chen G."/>
            <person name="Chen Y."/>
            <person name="Chen Z."/>
            <person name="Chinault C."/>
            <person name="Ciccodicola A."/>
            <person name="Clark S.Y."/>
            <person name="Clarke G."/>
            <person name="Clee C.M."/>
            <person name="Clegg S."/>
            <person name="Clerc-Blankenburg K."/>
            <person name="Clifford K."/>
            <person name="Cobley V."/>
            <person name="Cole C.G."/>
            <person name="Conquer J.S."/>
            <person name="Corby N."/>
            <person name="Connor R.E."/>
            <person name="David R."/>
            <person name="Davies J."/>
            <person name="Davis C."/>
            <person name="Davis J."/>
            <person name="Delgado O."/>
            <person name="Deshazo D."/>
            <person name="Dhami P."/>
            <person name="Ding Y."/>
            <person name="Dinh H."/>
            <person name="Dodsworth S."/>
            <person name="Draper H."/>
            <person name="Dugan-Rocha S."/>
            <person name="Dunham A."/>
            <person name="Dunn M."/>
            <person name="Durbin K.J."/>
            <person name="Dutta I."/>
            <person name="Eades T."/>
            <person name="Ellwood M."/>
            <person name="Emery-Cohen A."/>
            <person name="Errington H."/>
            <person name="Evans K.L."/>
            <person name="Faulkner L."/>
            <person name="Francis F."/>
            <person name="Frankland J."/>
            <person name="Fraser A.E."/>
            <person name="Galgoczy P."/>
            <person name="Gilbert J."/>
            <person name="Gill R."/>
            <person name="Gloeckner G."/>
            <person name="Gregory S.G."/>
            <person name="Gribble S."/>
            <person name="Griffiths C."/>
            <person name="Grocock R."/>
            <person name="Gu Y."/>
            <person name="Gwilliam R."/>
            <person name="Hamilton C."/>
            <person name="Hart E.A."/>
            <person name="Hawes A."/>
            <person name="Heath P.D."/>
            <person name="Heitmann K."/>
            <person name="Hennig S."/>
            <person name="Hernandez J."/>
            <person name="Hinzmann B."/>
            <person name="Ho S."/>
            <person name="Hoffs M."/>
            <person name="Howden P.J."/>
            <person name="Huckle E.J."/>
            <person name="Hume J."/>
            <person name="Hunt P.J."/>
            <person name="Hunt A.R."/>
            <person name="Isherwood J."/>
            <person name="Jacob L."/>
            <person name="Johnson D."/>
            <person name="Jones S."/>
            <person name="de Jong P.J."/>
            <person name="Joseph S.S."/>
            <person name="Keenan S."/>
            <person name="Kelly S."/>
            <person name="Kershaw J.K."/>
            <person name="Khan Z."/>
            <person name="Kioschis P."/>
            <person name="Klages S."/>
            <person name="Knights A.J."/>
            <person name="Kosiura A."/>
            <person name="Kovar-Smith C."/>
            <person name="Laird G.K."/>
            <person name="Langford C."/>
            <person name="Lawlor S."/>
            <person name="Leversha M."/>
            <person name="Lewis L."/>
            <person name="Liu W."/>
            <person name="Lloyd C."/>
            <person name="Lloyd D.M."/>
            <person name="Loulseged H."/>
            <person name="Loveland J.E."/>
            <person name="Lovell J.D."/>
            <person name="Lozado R."/>
            <person name="Lu J."/>
            <person name="Lyne R."/>
            <person name="Ma J."/>
            <person name="Maheshwari M."/>
            <person name="Matthews L.H."/>
            <person name="McDowall J."/>
            <person name="McLaren S."/>
            <person name="McMurray A."/>
            <person name="Meidl P."/>
            <person name="Meitinger T."/>
            <person name="Milne S."/>
            <person name="Miner G."/>
            <person name="Mistry S.L."/>
            <person name="Morgan M."/>
            <person name="Morris S."/>
            <person name="Mueller I."/>
            <person name="Mullikin J.C."/>
            <person name="Nguyen N."/>
            <person name="Nordsiek G."/>
            <person name="Nyakatura G."/>
            <person name="O'dell C.N."/>
            <person name="Okwuonu G."/>
            <person name="Palmer S."/>
            <person name="Pandian R."/>
            <person name="Parker D."/>
            <person name="Parrish J."/>
            <person name="Pasternak S."/>
            <person name="Patel D."/>
            <person name="Pearce A.V."/>
            <person name="Pearson D.M."/>
            <person name="Pelan S.E."/>
            <person name="Perez L."/>
            <person name="Porter K.M."/>
            <person name="Ramsey Y."/>
            <person name="Reichwald K."/>
            <person name="Rhodes S."/>
            <person name="Ridler K.A."/>
            <person name="Schlessinger D."/>
            <person name="Schueler M.G."/>
            <person name="Sehra H.K."/>
            <person name="Shaw-Smith C."/>
            <person name="Shen H."/>
            <person name="Sheridan E.M."/>
            <person name="Shownkeen R."/>
            <person name="Skuce C.D."/>
            <person name="Smith M.L."/>
            <person name="Sotheran E.C."/>
            <person name="Steingruber H.E."/>
            <person name="Steward C.A."/>
            <person name="Storey R."/>
            <person name="Swann R.M."/>
            <person name="Swarbreck D."/>
            <person name="Tabor P.E."/>
            <person name="Taudien S."/>
            <person name="Taylor T."/>
            <person name="Teague B."/>
            <person name="Thomas K."/>
            <person name="Thorpe A."/>
            <person name="Timms K."/>
            <person name="Tracey A."/>
            <person name="Trevanion S."/>
            <person name="Tromans A.C."/>
            <person name="d'Urso M."/>
            <person name="Verduzco D."/>
            <person name="Villasana D."/>
            <person name="Waldron L."/>
            <person name="Wall M."/>
            <person name="Wang Q."/>
            <person name="Warren J."/>
            <person name="Warry G.L."/>
            <person name="Wei X."/>
            <person name="West A."/>
            <person name="Whitehead S.L."/>
            <person name="Whiteley M.N."/>
            <person name="Wilkinson J.E."/>
            <person name="Willey D.L."/>
            <person name="Williams G."/>
            <person name="Williams L."/>
            <person name="Williamson A."/>
            <person name="Williamson H."/>
            <person name="Wilming L."/>
            <person name="Woodmansey R.L."/>
            <person name="Wray P.W."/>
            <person name="Yen J."/>
            <person name="Zhang J."/>
            <person name="Zhou J."/>
            <person name="Zoghbi H."/>
            <person name="Zorilla S."/>
            <person name="Buck D."/>
            <person name="Reinhardt R."/>
            <person name="Poustka A."/>
            <person name="Rosenthal A."/>
            <person name="Lehrach H."/>
            <person name="Meindl A."/>
            <person name="Minx P.J."/>
            <person name="Hillier L.W."/>
            <person name="Willard H.F."/>
            <person name="Wilson R.K."/>
            <person name="Waterston R.H."/>
            <person name="Rice C.M."/>
            <person name="Vaudin M."/>
            <person name="Coulson A."/>
            <person name="Nelson D.L."/>
            <person name="Weinstock G."/>
            <person name="Sulston J.E."/>
            <person name="Durbin R.M."/>
            <person name="Hubbard T."/>
            <person name="Gibbs R.A."/>
            <person name="Beck S."/>
            <person name="Rogers J."/>
            <person name="Bentley D.R."/>
        </authorList>
    </citation>
    <scope>NUCLEOTIDE SEQUENCE [LARGE SCALE GENOMIC DNA]</scope>
</reference>
<reference key="3">
    <citation type="journal article" date="2004" name="Genome Res.">
        <title>The status, quality, and expansion of the NIH full-length cDNA project: the Mammalian Gene Collection (MGC).</title>
        <authorList>
            <consortium name="The MGC Project Team"/>
        </authorList>
    </citation>
    <scope>NUCLEOTIDE SEQUENCE [LARGE SCALE MRNA] (ISOFORM 2)</scope>
</reference>
<reference key="4">
    <citation type="journal article" date="2000" name="Int. J. Cancer">
        <title>MAGE-B5, MAGE-B6, MAGE-C2, and MAGE-C3: four new members of the MAGE family with tumor-specific expression.</title>
        <authorList>
            <person name="Lucas S."/>
            <person name="De Plaen E."/>
            <person name="Boon T."/>
        </authorList>
    </citation>
    <scope>NUCLEOTIDE SEQUENCE [GENOMIC DNA] OF 362-538</scope>
    <scope>TISSUE SPECIFICITY</scope>
    <source>
        <tissue>Blood</tissue>
    </source>
</reference>
<reference key="5">
    <citation type="journal article" date="2008" name="Proteomics">
        <title>Large-scale phosphoproteome analysis of human liver tissue by enrichment and fractionation of phosphopeptides with strong anion exchange chromatography.</title>
        <authorList>
            <person name="Han G."/>
            <person name="Ye M."/>
            <person name="Zhou H."/>
            <person name="Jiang X."/>
            <person name="Feng S."/>
            <person name="Jiang X."/>
            <person name="Tian R."/>
            <person name="Wan D."/>
            <person name="Zou H."/>
            <person name="Gu J."/>
        </authorList>
    </citation>
    <scope>PHOSPHORYLATION [LARGE SCALE ANALYSIS] AT THR-478; THR-484 AND THR-485</scope>
    <scope>IDENTIFICATION BY MASS SPECTROMETRY [LARGE SCALE ANALYSIS]</scope>
    <source>
        <tissue>Liver</tissue>
    </source>
</reference>
<proteinExistence type="evidence at protein level"/>
<protein>
    <recommendedName>
        <fullName>Melanoma-associated antigen C3</fullName>
    </recommendedName>
    <alternativeName>
        <fullName>Cancer/testis antigen 7.2</fullName>
        <shortName>CT7.2</shortName>
    </alternativeName>
    <alternativeName>
        <fullName>Hepatocellular carcinoma-associated antigen 2</fullName>
    </alternativeName>
    <alternativeName>
        <fullName>MAGE-C3 antigen</fullName>
    </alternativeName>
</protein>
<sequence length="643" mass="71909">MLLPCHWVLDATFSDGSLGQWVKNTCATYALSPVVLPPQPQPRKKATDKDYSAFHLGHLREVRLFLRGGTSDQRMDSLVLCPTYFKLWRTLSGSPGLQLSDLHFGSQPEGKFSLRRAVSVKQREEPQDWPLNEKRTLWKDSDLPTWRRGTGYTLSLPAVSPGKRLWGEKAGSLPESEPLFTYTLDEKVDKLVQFLLLKYQAKEPLTRAEMQMNVINTYTGYFPMIFRKAREFIEILFGISLTEVDPDHFYVFVNTLDLTCEGSLSDEQGMPQNRLLILILSVIFIKGNCASEEVIWEVLNAIGPWSALAGFADVLSRLALWESEGPEAFCEESGLRSAEGSVLDLANPQGLAGHRQEDGRRGLTEASPQQKKGGEDEDMPAAGMPPLPQSPPEIPPQGPPKISPQGPPQSPPQSPLDSCSSPLLWTRLDEESSSEEEDTATWHALPESESLPRYALDEKVAELVQFLLLKYQTKEPVTKAEMLTTVIKKYKDYFPMIFGKAHEFIELIFGIALTDMDPDNHSYFFEDTLDLTYEGSLIDDQGMPKNCLLILILSMIFIKGSCVPEEVIWEVLSAIGPIQRPAREVLEFLSKLSSIIPSAFPSWYMDALKDMEDRAQAIIDTTDDATAMASASPSVMSTNFCPE</sequence>
<feature type="chain" id="PRO_0000156722" description="Melanoma-associated antigen C3">
    <location>
        <begin position="1"/>
        <end position="643"/>
    </location>
</feature>
<feature type="domain" description="MAGE 1" evidence="1">
    <location>
        <begin position="184"/>
        <end position="384"/>
    </location>
</feature>
<feature type="domain" description="MAGE 2" evidence="1">
    <location>
        <begin position="456"/>
        <end position="643"/>
    </location>
</feature>
<feature type="region of interest" description="Disordered" evidence="2">
    <location>
        <begin position="347"/>
        <end position="421"/>
    </location>
</feature>
<feature type="compositionally biased region" description="Basic and acidic residues" evidence="2">
    <location>
        <begin position="354"/>
        <end position="363"/>
    </location>
</feature>
<feature type="compositionally biased region" description="Pro residues" evidence="2">
    <location>
        <begin position="383"/>
        <end position="414"/>
    </location>
</feature>
<feature type="modified residue" description="Phosphothreonine" evidence="6">
    <location>
        <position position="478"/>
    </location>
</feature>
<feature type="modified residue" description="Phosphothreonine" evidence="6">
    <location>
        <position position="484"/>
    </location>
</feature>
<feature type="modified residue" description="Phosphothreonine" evidence="6">
    <location>
        <position position="485"/>
    </location>
</feature>
<feature type="splice variant" id="VSP_043489" description="In isoform 2." evidence="4">
    <original>MLLPCHWVLDATFSDGSLGQWVKNTCATYALSPVVLPPQPQPRKKATDKDYSAFHLGHLREVRLFLRGGTSDQRMD</original>
    <variation>MPLFPNLPRLSFEEDFQNPSVTEDLVDAQDSIDEEEEDASSTSSSSFHFLFPSSSSLSSSSPLSSPLPSTLILGVP</variation>
    <location>
        <begin position="1"/>
        <end position="76"/>
    </location>
</feature>
<feature type="splice variant" id="VSP_043490" description="In isoform 2." evidence="4">
    <location>
        <begin position="77"/>
        <end position="374"/>
    </location>
</feature>
<feature type="splice variant" id="VSP_043491" description="In isoform 2." evidence="4">
    <original>PIQRPAREVLEFLSKLSSIIPSAFPSWYMDALKDMEDRAQAIIDTTDDATAMASASPSVMSTNFCPE</original>
    <variation>VCAGREHFIYGDPRKLLTIHWVQRKYLEYREVPNSAPPRYEFLWGPRAHSEASKRSLRVFIQAIQYHP</variation>
    <location>
        <begin position="577"/>
        <end position="643"/>
    </location>
</feature>
<feature type="sequence variant" id="VAR_060069" description="In dbSNP:rs11095909.">
    <original>S</original>
    <variation>P</variation>
    <location>
        <position position="155"/>
    </location>
</feature>
<feature type="sequence variant" id="VAR_053505" description="In dbSNP:rs11095910.">
    <original>L</original>
    <variation>M</variation>
    <location>
        <position position="165"/>
    </location>
</feature>
<feature type="sequence variant" id="VAR_053506" description="In dbSNP:rs176024.">
    <original>A</original>
    <variation>T</variation>
    <location>
        <position position="307"/>
    </location>
</feature>
<feature type="sequence variant" id="VAR_053507" description="In dbSNP:rs176026.">
    <original>A</original>
    <variation>T</variation>
    <location>
        <position position="328"/>
    </location>
</feature>
<feature type="sequence conflict" description="In Ref. 3." evidence="5" ref="3">
    <original>GLTEASPQQKKGG</original>
    <variation>SSPLPSTLILGVP</variation>
    <location>
        <begin position="362"/>
        <end position="374"/>
    </location>
</feature>